<evidence type="ECO:0000255" key="1">
    <source>
        <dbReference type="HAMAP-Rule" id="MF_00031"/>
    </source>
</evidence>
<protein>
    <recommendedName>
        <fullName evidence="1">Holliday junction branch migration complex subunit RuvA</fullName>
    </recommendedName>
</protein>
<sequence>MFTYFRGELIEASPDEAVIEVSGVGYLLSISATTYRQLPEPGREVLVLAHLHVKEDLMQLFGFLEEEERQLFRLLLSISGVGPKLALAILSGLQVHEIQEAIVSNMPERLFEITGVGKKTAARIVLELRDRILKLRPSGGTKSVSRLSESSMRDDAVNALVTLGFLRSVAQKAVTESLTSLRNPQVEDLVRDALLTIRTP</sequence>
<keyword id="KW-0963">Cytoplasm</keyword>
<keyword id="KW-0227">DNA damage</keyword>
<keyword id="KW-0233">DNA recombination</keyword>
<keyword id="KW-0234">DNA repair</keyword>
<keyword id="KW-0238">DNA-binding</keyword>
<gene>
    <name evidence="1" type="primary">ruvA</name>
    <name type="ordered locus">Cphamn1_0422</name>
</gene>
<reference key="1">
    <citation type="submission" date="2008-06" db="EMBL/GenBank/DDBJ databases">
        <title>Complete sequence of Chlorobium phaeobacteroides BS1.</title>
        <authorList>
            <consortium name="US DOE Joint Genome Institute"/>
            <person name="Lucas S."/>
            <person name="Copeland A."/>
            <person name="Lapidus A."/>
            <person name="Glavina del Rio T."/>
            <person name="Dalin E."/>
            <person name="Tice H."/>
            <person name="Bruce D."/>
            <person name="Goodwin L."/>
            <person name="Pitluck S."/>
            <person name="Schmutz J."/>
            <person name="Larimer F."/>
            <person name="Land M."/>
            <person name="Hauser L."/>
            <person name="Kyrpides N."/>
            <person name="Ovchinnikova G."/>
            <person name="Li T."/>
            <person name="Liu Z."/>
            <person name="Zhao F."/>
            <person name="Overmann J."/>
            <person name="Bryant D.A."/>
            <person name="Richardson P."/>
        </authorList>
    </citation>
    <scope>NUCLEOTIDE SEQUENCE [LARGE SCALE GENOMIC DNA]</scope>
    <source>
        <strain>BS1</strain>
    </source>
</reference>
<name>RUVA_CHLPB</name>
<dbReference type="EMBL" id="CP001101">
    <property type="protein sequence ID" value="ACE03387.1"/>
    <property type="molecule type" value="Genomic_DNA"/>
</dbReference>
<dbReference type="SMR" id="B3ELQ8"/>
<dbReference type="STRING" id="331678.Cphamn1_0422"/>
<dbReference type="KEGG" id="cpb:Cphamn1_0422"/>
<dbReference type="eggNOG" id="COG0632">
    <property type="taxonomic scope" value="Bacteria"/>
</dbReference>
<dbReference type="HOGENOM" id="CLU_087936_3_0_10"/>
<dbReference type="OrthoDB" id="5293449at2"/>
<dbReference type="GO" id="GO:0005737">
    <property type="term" value="C:cytoplasm"/>
    <property type="evidence" value="ECO:0007669"/>
    <property type="project" value="UniProtKB-SubCell"/>
</dbReference>
<dbReference type="GO" id="GO:0009379">
    <property type="term" value="C:Holliday junction helicase complex"/>
    <property type="evidence" value="ECO:0007669"/>
    <property type="project" value="InterPro"/>
</dbReference>
<dbReference type="GO" id="GO:0048476">
    <property type="term" value="C:Holliday junction resolvase complex"/>
    <property type="evidence" value="ECO:0007669"/>
    <property type="project" value="UniProtKB-UniRule"/>
</dbReference>
<dbReference type="GO" id="GO:0005524">
    <property type="term" value="F:ATP binding"/>
    <property type="evidence" value="ECO:0007669"/>
    <property type="project" value="InterPro"/>
</dbReference>
<dbReference type="GO" id="GO:0000400">
    <property type="term" value="F:four-way junction DNA binding"/>
    <property type="evidence" value="ECO:0007669"/>
    <property type="project" value="UniProtKB-UniRule"/>
</dbReference>
<dbReference type="GO" id="GO:0009378">
    <property type="term" value="F:four-way junction helicase activity"/>
    <property type="evidence" value="ECO:0007669"/>
    <property type="project" value="InterPro"/>
</dbReference>
<dbReference type="GO" id="GO:0006310">
    <property type="term" value="P:DNA recombination"/>
    <property type="evidence" value="ECO:0007669"/>
    <property type="project" value="UniProtKB-UniRule"/>
</dbReference>
<dbReference type="GO" id="GO:0006281">
    <property type="term" value="P:DNA repair"/>
    <property type="evidence" value="ECO:0007669"/>
    <property type="project" value="UniProtKB-UniRule"/>
</dbReference>
<dbReference type="CDD" id="cd14332">
    <property type="entry name" value="UBA_RuvA_C"/>
    <property type="match status" value="1"/>
</dbReference>
<dbReference type="Gene3D" id="1.10.150.20">
    <property type="entry name" value="5' to 3' exonuclease, C-terminal subdomain"/>
    <property type="match status" value="1"/>
</dbReference>
<dbReference type="Gene3D" id="1.10.8.10">
    <property type="entry name" value="DNA helicase RuvA subunit, C-terminal domain"/>
    <property type="match status" value="1"/>
</dbReference>
<dbReference type="Gene3D" id="2.40.50.140">
    <property type="entry name" value="Nucleic acid-binding proteins"/>
    <property type="match status" value="1"/>
</dbReference>
<dbReference type="HAMAP" id="MF_00031">
    <property type="entry name" value="DNA_HJ_migration_RuvA"/>
    <property type="match status" value="1"/>
</dbReference>
<dbReference type="InterPro" id="IPR013849">
    <property type="entry name" value="DNA_helicase_Holl-junc_RuvA_I"/>
</dbReference>
<dbReference type="InterPro" id="IPR003583">
    <property type="entry name" value="Hlx-hairpin-Hlx_DNA-bd_motif"/>
</dbReference>
<dbReference type="InterPro" id="IPR012340">
    <property type="entry name" value="NA-bd_OB-fold"/>
</dbReference>
<dbReference type="InterPro" id="IPR000085">
    <property type="entry name" value="RuvA"/>
</dbReference>
<dbReference type="InterPro" id="IPR010994">
    <property type="entry name" value="RuvA_2-like"/>
</dbReference>
<dbReference type="InterPro" id="IPR011114">
    <property type="entry name" value="RuvA_C"/>
</dbReference>
<dbReference type="InterPro" id="IPR036267">
    <property type="entry name" value="RuvA_C_sf"/>
</dbReference>
<dbReference type="NCBIfam" id="TIGR00084">
    <property type="entry name" value="ruvA"/>
    <property type="match status" value="1"/>
</dbReference>
<dbReference type="Pfam" id="PF14520">
    <property type="entry name" value="HHH_5"/>
    <property type="match status" value="1"/>
</dbReference>
<dbReference type="Pfam" id="PF07499">
    <property type="entry name" value="RuvA_C"/>
    <property type="match status" value="1"/>
</dbReference>
<dbReference type="Pfam" id="PF01330">
    <property type="entry name" value="RuvA_N"/>
    <property type="match status" value="1"/>
</dbReference>
<dbReference type="SMART" id="SM00278">
    <property type="entry name" value="HhH1"/>
    <property type="match status" value="2"/>
</dbReference>
<dbReference type="SUPFAM" id="SSF46929">
    <property type="entry name" value="DNA helicase RuvA subunit, C-terminal domain"/>
    <property type="match status" value="1"/>
</dbReference>
<dbReference type="SUPFAM" id="SSF50249">
    <property type="entry name" value="Nucleic acid-binding proteins"/>
    <property type="match status" value="1"/>
</dbReference>
<dbReference type="SUPFAM" id="SSF47781">
    <property type="entry name" value="RuvA domain 2-like"/>
    <property type="match status" value="1"/>
</dbReference>
<proteinExistence type="inferred from homology"/>
<comment type="function">
    <text evidence="1">The RuvA-RuvB-RuvC complex processes Holliday junction (HJ) DNA during genetic recombination and DNA repair, while the RuvA-RuvB complex plays an important role in the rescue of blocked DNA replication forks via replication fork reversal (RFR). RuvA specifically binds to HJ cruciform DNA, conferring on it an open structure. The RuvB hexamer acts as an ATP-dependent pump, pulling dsDNA into and through the RuvAB complex. HJ branch migration allows RuvC to scan DNA until it finds its consensus sequence, where it cleaves and resolves the cruciform DNA.</text>
</comment>
<comment type="subunit">
    <text evidence="1">Homotetramer. Forms an RuvA(8)-RuvB(12)-Holliday junction (HJ) complex. HJ DNA is sandwiched between 2 RuvA tetramers; dsDNA enters through RuvA and exits via RuvB. An RuvB hexamer assembles on each DNA strand where it exits the tetramer. Each RuvB hexamer is contacted by two RuvA subunits (via domain III) on 2 adjacent RuvB subunits; this complex drives branch migration. In the full resolvosome a probable DNA-RuvA(4)-RuvB(12)-RuvC(2) complex forms which resolves the HJ.</text>
</comment>
<comment type="subcellular location">
    <subcellularLocation>
        <location evidence="1">Cytoplasm</location>
    </subcellularLocation>
</comment>
<comment type="domain">
    <text evidence="1">Has three domains with a flexible linker between the domains II and III and assumes an 'L' shape. Domain III is highly mobile and contacts RuvB.</text>
</comment>
<comment type="similarity">
    <text evidence="1">Belongs to the RuvA family.</text>
</comment>
<feature type="chain" id="PRO_1000090298" description="Holliday junction branch migration complex subunit RuvA">
    <location>
        <begin position="1"/>
        <end position="200"/>
    </location>
</feature>
<feature type="region of interest" description="Domain I" evidence="1">
    <location>
        <begin position="1"/>
        <end position="64"/>
    </location>
</feature>
<feature type="region of interest" description="Domain II" evidence="1">
    <location>
        <begin position="65"/>
        <end position="143"/>
    </location>
</feature>
<feature type="region of interest" description="Flexible linker" evidence="1">
    <location>
        <begin position="144"/>
        <end position="148"/>
    </location>
</feature>
<feature type="region of interest" description="Domain III" evidence="1">
    <location>
        <begin position="148"/>
        <end position="200"/>
    </location>
</feature>
<organism>
    <name type="scientific">Chlorobium phaeobacteroides (strain BS1)</name>
    <dbReference type="NCBI Taxonomy" id="331678"/>
    <lineage>
        <taxon>Bacteria</taxon>
        <taxon>Pseudomonadati</taxon>
        <taxon>Chlorobiota</taxon>
        <taxon>Chlorobiia</taxon>
        <taxon>Chlorobiales</taxon>
        <taxon>Chlorobiaceae</taxon>
        <taxon>Chlorobium/Pelodictyon group</taxon>
        <taxon>Chlorobium</taxon>
    </lineage>
</organism>
<accession>B3ELQ8</accession>